<proteinExistence type="inferred from homology"/>
<keyword id="KW-0997">Cell inner membrane</keyword>
<keyword id="KW-1003">Cell membrane</keyword>
<keyword id="KW-0472">Membrane</keyword>
<keyword id="KW-0812">Transmembrane</keyword>
<keyword id="KW-1133">Transmembrane helix</keyword>
<accession>B7M4Y6</accession>
<organism>
    <name type="scientific">Escherichia coli O8 (strain IAI1)</name>
    <dbReference type="NCBI Taxonomy" id="585034"/>
    <lineage>
        <taxon>Bacteria</taxon>
        <taxon>Pseudomonadati</taxon>
        <taxon>Pseudomonadota</taxon>
        <taxon>Gammaproteobacteria</taxon>
        <taxon>Enterobacterales</taxon>
        <taxon>Enterobacteriaceae</taxon>
        <taxon>Escherichia</taxon>
    </lineage>
</organism>
<reference key="1">
    <citation type="journal article" date="2009" name="PLoS Genet.">
        <title>Organised genome dynamics in the Escherichia coli species results in highly diverse adaptive paths.</title>
        <authorList>
            <person name="Touchon M."/>
            <person name="Hoede C."/>
            <person name="Tenaillon O."/>
            <person name="Barbe V."/>
            <person name="Baeriswyl S."/>
            <person name="Bidet P."/>
            <person name="Bingen E."/>
            <person name="Bonacorsi S."/>
            <person name="Bouchier C."/>
            <person name="Bouvet O."/>
            <person name="Calteau A."/>
            <person name="Chiapello H."/>
            <person name="Clermont O."/>
            <person name="Cruveiller S."/>
            <person name="Danchin A."/>
            <person name="Diard M."/>
            <person name="Dossat C."/>
            <person name="Karoui M.E."/>
            <person name="Frapy E."/>
            <person name="Garry L."/>
            <person name="Ghigo J.M."/>
            <person name="Gilles A.M."/>
            <person name="Johnson J."/>
            <person name="Le Bouguenec C."/>
            <person name="Lescat M."/>
            <person name="Mangenot S."/>
            <person name="Martinez-Jehanne V."/>
            <person name="Matic I."/>
            <person name="Nassif X."/>
            <person name="Oztas S."/>
            <person name="Petit M.A."/>
            <person name="Pichon C."/>
            <person name="Rouy Z."/>
            <person name="Ruf C.S."/>
            <person name="Schneider D."/>
            <person name="Tourret J."/>
            <person name="Vacherie B."/>
            <person name="Vallenet D."/>
            <person name="Medigue C."/>
            <person name="Rocha E.P.C."/>
            <person name="Denamur E."/>
        </authorList>
    </citation>
    <scope>NUCLEOTIDE SEQUENCE [LARGE SCALE GENOMIC DNA]</scope>
    <source>
        <strain>IAI1</strain>
    </source>
</reference>
<name>YOHJ_ECO8A</name>
<comment type="subcellular location">
    <subcellularLocation>
        <location evidence="1">Cell inner membrane</location>
        <topology evidence="1">Multi-pass membrane protein</topology>
    </subcellularLocation>
</comment>
<comment type="similarity">
    <text evidence="1">Belongs to the UPF0299 family.</text>
</comment>
<feature type="chain" id="PRO_1000137358" description="UPF0299 membrane protein YohJ">
    <location>
        <begin position="1"/>
        <end position="132"/>
    </location>
</feature>
<feature type="transmembrane region" description="Helical" evidence="1">
    <location>
        <begin position="7"/>
        <end position="27"/>
    </location>
</feature>
<feature type="transmembrane region" description="Helical" evidence="1">
    <location>
        <begin position="31"/>
        <end position="51"/>
    </location>
</feature>
<feature type="transmembrane region" description="Helical" evidence="1">
    <location>
        <begin position="63"/>
        <end position="83"/>
    </location>
</feature>
<feature type="transmembrane region" description="Helical" evidence="1">
    <location>
        <begin position="93"/>
        <end position="113"/>
    </location>
</feature>
<gene>
    <name evidence="1" type="primary">yohJ</name>
    <name type="ordered locus">ECIAI1_2218</name>
</gene>
<protein>
    <recommendedName>
        <fullName evidence="1">UPF0299 membrane protein YohJ</fullName>
    </recommendedName>
</protein>
<sequence>MSKTLNIIWQYLRAFVLIYACLYAGIFIASLLPVTIPGSIIGMLILFVLLALQILPAKWVNPGCYVLIRYMALLFVPIGVGVMQYFDLLRAQFGPVVVSCAVSTLVVFLVVSWSSQLVHGERKVVGQKGSEE</sequence>
<evidence type="ECO:0000255" key="1">
    <source>
        <dbReference type="HAMAP-Rule" id="MF_01144"/>
    </source>
</evidence>
<dbReference type="EMBL" id="CU928160">
    <property type="protein sequence ID" value="CAQ99063.1"/>
    <property type="molecule type" value="Genomic_DNA"/>
</dbReference>
<dbReference type="RefSeq" id="WP_001295452.1">
    <property type="nucleotide sequence ID" value="NC_011741.1"/>
</dbReference>
<dbReference type="SMR" id="B7M4Y6"/>
<dbReference type="KEGG" id="ecr:ECIAI1_2218"/>
<dbReference type="HOGENOM" id="CLU_113736_1_1_6"/>
<dbReference type="GO" id="GO:0005886">
    <property type="term" value="C:plasma membrane"/>
    <property type="evidence" value="ECO:0007669"/>
    <property type="project" value="UniProtKB-SubCell"/>
</dbReference>
<dbReference type="HAMAP" id="MF_01144">
    <property type="entry name" value="UPF0299"/>
    <property type="match status" value="1"/>
</dbReference>
<dbReference type="InterPro" id="IPR005538">
    <property type="entry name" value="LrgA/CidA"/>
</dbReference>
<dbReference type="InterPro" id="IPR022957">
    <property type="entry name" value="Uncharacterised_UPF0299"/>
</dbReference>
<dbReference type="NCBIfam" id="NF002494">
    <property type="entry name" value="PRK01821.1"/>
    <property type="match status" value="1"/>
</dbReference>
<dbReference type="PANTHER" id="PTHR33931">
    <property type="entry name" value="HOLIN-LIKE PROTEIN CIDA-RELATED"/>
    <property type="match status" value="1"/>
</dbReference>
<dbReference type="PANTHER" id="PTHR33931:SF5">
    <property type="entry name" value="UPF0299 MEMBRANE PROTEIN YOHJ"/>
    <property type="match status" value="1"/>
</dbReference>
<dbReference type="Pfam" id="PF03788">
    <property type="entry name" value="LrgA"/>
    <property type="match status" value="1"/>
</dbReference>